<accession>B7ND35</accession>
<evidence type="ECO:0000255" key="1">
    <source>
        <dbReference type="HAMAP-Rule" id="MF_00180"/>
    </source>
</evidence>
<comment type="function">
    <text evidence="1">Catalyzes the conversion of D-ribulose 5-phosphate to formate and 3,4-dihydroxy-2-butanone 4-phosphate.</text>
</comment>
<comment type="catalytic activity">
    <reaction evidence="1">
        <text>D-ribulose 5-phosphate = (2S)-2-hydroxy-3-oxobutyl phosphate + formate + H(+)</text>
        <dbReference type="Rhea" id="RHEA:18457"/>
        <dbReference type="ChEBI" id="CHEBI:15378"/>
        <dbReference type="ChEBI" id="CHEBI:15740"/>
        <dbReference type="ChEBI" id="CHEBI:58121"/>
        <dbReference type="ChEBI" id="CHEBI:58830"/>
        <dbReference type="EC" id="4.1.99.12"/>
    </reaction>
</comment>
<comment type="cofactor">
    <cofactor evidence="1">
        <name>Mg(2+)</name>
        <dbReference type="ChEBI" id="CHEBI:18420"/>
    </cofactor>
    <cofactor evidence="1">
        <name>Mn(2+)</name>
        <dbReference type="ChEBI" id="CHEBI:29035"/>
    </cofactor>
    <text evidence="1">Binds 2 divalent metal cations per subunit. Magnesium or manganese.</text>
</comment>
<comment type="pathway">
    <text evidence="1">Cofactor biosynthesis; riboflavin biosynthesis; 2-hydroxy-3-oxobutyl phosphate from D-ribulose 5-phosphate: step 1/1.</text>
</comment>
<comment type="subunit">
    <text evidence="1">Homodimer.</text>
</comment>
<comment type="similarity">
    <text evidence="1">Belongs to the DHBP synthase family.</text>
</comment>
<protein>
    <recommendedName>
        <fullName evidence="1">3,4-dihydroxy-2-butanone 4-phosphate synthase</fullName>
        <shortName evidence="1">DHBP synthase</shortName>
        <ecNumber evidence="1">4.1.99.12</ecNumber>
    </recommendedName>
</protein>
<organism>
    <name type="scientific">Escherichia coli O17:K52:H18 (strain UMN026 / ExPEC)</name>
    <dbReference type="NCBI Taxonomy" id="585056"/>
    <lineage>
        <taxon>Bacteria</taxon>
        <taxon>Pseudomonadati</taxon>
        <taxon>Pseudomonadota</taxon>
        <taxon>Gammaproteobacteria</taxon>
        <taxon>Enterobacterales</taxon>
        <taxon>Enterobacteriaceae</taxon>
        <taxon>Escherichia</taxon>
    </lineage>
</organism>
<proteinExistence type="inferred from homology"/>
<dbReference type="EC" id="4.1.99.12" evidence="1"/>
<dbReference type="EMBL" id="CU928163">
    <property type="protein sequence ID" value="CAR14685.1"/>
    <property type="molecule type" value="Genomic_DNA"/>
</dbReference>
<dbReference type="RefSeq" id="WP_001076993.1">
    <property type="nucleotide sequence ID" value="NC_011751.1"/>
</dbReference>
<dbReference type="RefSeq" id="YP_002414190.1">
    <property type="nucleotide sequence ID" value="NC_011751.1"/>
</dbReference>
<dbReference type="SMR" id="B7ND35"/>
<dbReference type="STRING" id="585056.ECUMN_3529"/>
<dbReference type="KEGG" id="eum:ECUMN_3529"/>
<dbReference type="PATRIC" id="fig|585056.7.peg.3704"/>
<dbReference type="HOGENOM" id="CLU_020273_3_0_6"/>
<dbReference type="UniPathway" id="UPA00275">
    <property type="reaction ID" value="UER00399"/>
</dbReference>
<dbReference type="Proteomes" id="UP000007097">
    <property type="component" value="Chromosome"/>
</dbReference>
<dbReference type="GO" id="GO:0005829">
    <property type="term" value="C:cytosol"/>
    <property type="evidence" value="ECO:0007669"/>
    <property type="project" value="TreeGrafter"/>
</dbReference>
<dbReference type="GO" id="GO:0008686">
    <property type="term" value="F:3,4-dihydroxy-2-butanone-4-phosphate synthase activity"/>
    <property type="evidence" value="ECO:0007669"/>
    <property type="project" value="UniProtKB-UniRule"/>
</dbReference>
<dbReference type="GO" id="GO:0000287">
    <property type="term" value="F:magnesium ion binding"/>
    <property type="evidence" value="ECO:0007669"/>
    <property type="project" value="UniProtKB-UniRule"/>
</dbReference>
<dbReference type="GO" id="GO:0030145">
    <property type="term" value="F:manganese ion binding"/>
    <property type="evidence" value="ECO:0007669"/>
    <property type="project" value="UniProtKB-UniRule"/>
</dbReference>
<dbReference type="GO" id="GO:0009231">
    <property type="term" value="P:riboflavin biosynthetic process"/>
    <property type="evidence" value="ECO:0007669"/>
    <property type="project" value="UniProtKB-UniRule"/>
</dbReference>
<dbReference type="FunFam" id="3.90.870.10:FF:000002">
    <property type="entry name" value="3,4-dihydroxy-2-butanone 4-phosphate synthase"/>
    <property type="match status" value="1"/>
</dbReference>
<dbReference type="Gene3D" id="3.90.870.10">
    <property type="entry name" value="DHBP synthase"/>
    <property type="match status" value="1"/>
</dbReference>
<dbReference type="HAMAP" id="MF_00180">
    <property type="entry name" value="RibB"/>
    <property type="match status" value="1"/>
</dbReference>
<dbReference type="InterPro" id="IPR017945">
    <property type="entry name" value="DHBP_synth_RibB-like_a/b_dom"/>
</dbReference>
<dbReference type="InterPro" id="IPR000422">
    <property type="entry name" value="DHBP_synthase_RibB"/>
</dbReference>
<dbReference type="NCBIfam" id="TIGR00506">
    <property type="entry name" value="ribB"/>
    <property type="match status" value="1"/>
</dbReference>
<dbReference type="PANTHER" id="PTHR21327:SF38">
    <property type="entry name" value="3,4-DIHYDROXY-2-BUTANONE 4-PHOSPHATE SYNTHASE"/>
    <property type="match status" value="1"/>
</dbReference>
<dbReference type="PANTHER" id="PTHR21327">
    <property type="entry name" value="GTP CYCLOHYDROLASE II-RELATED"/>
    <property type="match status" value="1"/>
</dbReference>
<dbReference type="Pfam" id="PF00926">
    <property type="entry name" value="DHBP_synthase"/>
    <property type="match status" value="1"/>
</dbReference>
<dbReference type="SUPFAM" id="SSF55821">
    <property type="entry name" value="YrdC/RibB"/>
    <property type="match status" value="1"/>
</dbReference>
<keyword id="KW-0456">Lyase</keyword>
<keyword id="KW-0460">Magnesium</keyword>
<keyword id="KW-0464">Manganese</keyword>
<keyword id="KW-0479">Metal-binding</keyword>
<keyword id="KW-0686">Riboflavin biosynthesis</keyword>
<sequence>MNQTLLSSFGTPFERVENALAALREGRGVMVLDDEDRENEGDMIFPAETMTVEQMALTIRHGSGIVCLCITEDRRKQLDLPMMVENNTSAYGTGFTVTIEAAEGVTTGVSAADRITTVRAAIADDAKPSDLNRPGHVFPLRAQAGGVLTRGGHTEATIDLMTLAGFKPAGVLCELTNDDGTMARAPECIEFANKHNMALVTIEDLVAYRQAHERKAS</sequence>
<reference key="1">
    <citation type="journal article" date="2009" name="PLoS Genet.">
        <title>Organised genome dynamics in the Escherichia coli species results in highly diverse adaptive paths.</title>
        <authorList>
            <person name="Touchon M."/>
            <person name="Hoede C."/>
            <person name="Tenaillon O."/>
            <person name="Barbe V."/>
            <person name="Baeriswyl S."/>
            <person name="Bidet P."/>
            <person name="Bingen E."/>
            <person name="Bonacorsi S."/>
            <person name="Bouchier C."/>
            <person name="Bouvet O."/>
            <person name="Calteau A."/>
            <person name="Chiapello H."/>
            <person name="Clermont O."/>
            <person name="Cruveiller S."/>
            <person name="Danchin A."/>
            <person name="Diard M."/>
            <person name="Dossat C."/>
            <person name="Karoui M.E."/>
            <person name="Frapy E."/>
            <person name="Garry L."/>
            <person name="Ghigo J.M."/>
            <person name="Gilles A.M."/>
            <person name="Johnson J."/>
            <person name="Le Bouguenec C."/>
            <person name="Lescat M."/>
            <person name="Mangenot S."/>
            <person name="Martinez-Jehanne V."/>
            <person name="Matic I."/>
            <person name="Nassif X."/>
            <person name="Oztas S."/>
            <person name="Petit M.A."/>
            <person name="Pichon C."/>
            <person name="Rouy Z."/>
            <person name="Ruf C.S."/>
            <person name="Schneider D."/>
            <person name="Tourret J."/>
            <person name="Vacherie B."/>
            <person name="Vallenet D."/>
            <person name="Medigue C."/>
            <person name="Rocha E.P.C."/>
            <person name="Denamur E."/>
        </authorList>
    </citation>
    <scope>NUCLEOTIDE SEQUENCE [LARGE SCALE GENOMIC DNA]</scope>
    <source>
        <strain>UMN026 / ExPEC</strain>
    </source>
</reference>
<name>RIBB_ECOLU</name>
<feature type="chain" id="PRO_1000118438" description="3,4-dihydroxy-2-butanone 4-phosphate synthase">
    <location>
        <begin position="1"/>
        <end position="217"/>
    </location>
</feature>
<feature type="binding site" evidence="1">
    <location>
        <begin position="37"/>
        <end position="38"/>
    </location>
    <ligand>
        <name>D-ribulose 5-phosphate</name>
        <dbReference type="ChEBI" id="CHEBI:58121"/>
    </ligand>
</feature>
<feature type="binding site" evidence="1">
    <location>
        <position position="38"/>
    </location>
    <ligand>
        <name>Mg(2+)</name>
        <dbReference type="ChEBI" id="CHEBI:18420"/>
        <label>1</label>
    </ligand>
</feature>
<feature type="binding site" evidence="1">
    <location>
        <position position="38"/>
    </location>
    <ligand>
        <name>Mg(2+)</name>
        <dbReference type="ChEBI" id="CHEBI:18420"/>
        <label>2</label>
    </ligand>
</feature>
<feature type="binding site" evidence="1">
    <location>
        <position position="42"/>
    </location>
    <ligand>
        <name>D-ribulose 5-phosphate</name>
        <dbReference type="ChEBI" id="CHEBI:58121"/>
    </ligand>
</feature>
<feature type="binding site" evidence="1">
    <location>
        <begin position="150"/>
        <end position="154"/>
    </location>
    <ligand>
        <name>D-ribulose 5-phosphate</name>
        <dbReference type="ChEBI" id="CHEBI:58121"/>
    </ligand>
</feature>
<feature type="binding site" evidence="1">
    <location>
        <position position="153"/>
    </location>
    <ligand>
        <name>Mg(2+)</name>
        <dbReference type="ChEBI" id="CHEBI:18420"/>
        <label>2</label>
    </ligand>
</feature>
<feature type="binding site" evidence="1">
    <location>
        <position position="174"/>
    </location>
    <ligand>
        <name>D-ribulose 5-phosphate</name>
        <dbReference type="ChEBI" id="CHEBI:58121"/>
    </ligand>
</feature>
<feature type="site" description="Essential for catalytic activity" evidence="1">
    <location>
        <position position="136"/>
    </location>
</feature>
<feature type="site" description="Essential for catalytic activity" evidence="1">
    <location>
        <position position="174"/>
    </location>
</feature>
<gene>
    <name evidence="1" type="primary">ribB</name>
    <name type="ordered locus">ECUMN_3529</name>
</gene>